<keyword id="KW-0240">DNA-directed RNA polymerase</keyword>
<keyword id="KW-0460">Magnesium</keyword>
<keyword id="KW-0479">Metal-binding</keyword>
<keyword id="KW-0548">Nucleotidyltransferase</keyword>
<keyword id="KW-0804">Transcription</keyword>
<keyword id="KW-0808">Transferase</keyword>
<keyword id="KW-0862">Zinc</keyword>
<protein>
    <recommendedName>
        <fullName evidence="1">DNA-directed RNA polymerase subunit beta'</fullName>
        <shortName evidence="1">RNAP subunit beta'</shortName>
        <ecNumber evidence="1">2.7.7.6</ecNumber>
    </recommendedName>
    <alternativeName>
        <fullName evidence="1">RNA polymerase subunit beta'</fullName>
    </alternativeName>
    <alternativeName>
        <fullName evidence="1">Transcriptase subunit beta'</fullName>
    </alternativeName>
</protein>
<name>RPOC_HYDCU</name>
<evidence type="ECO:0000255" key="1">
    <source>
        <dbReference type="HAMAP-Rule" id="MF_01322"/>
    </source>
</evidence>
<proteinExistence type="inferred from homology"/>
<gene>
    <name evidence="1" type="primary">rpoC</name>
    <name type="ordered locus">Tcr_0289</name>
</gene>
<dbReference type="EC" id="2.7.7.6" evidence="1"/>
<dbReference type="EMBL" id="CP000109">
    <property type="protein sequence ID" value="ABB40885.1"/>
    <property type="molecule type" value="Genomic_DNA"/>
</dbReference>
<dbReference type="SMR" id="Q31IY8"/>
<dbReference type="STRING" id="317025.Tcr_0289"/>
<dbReference type="KEGG" id="tcx:Tcr_0289"/>
<dbReference type="eggNOG" id="COG0086">
    <property type="taxonomic scope" value="Bacteria"/>
</dbReference>
<dbReference type="HOGENOM" id="CLU_000524_3_1_6"/>
<dbReference type="OrthoDB" id="9815296at2"/>
<dbReference type="GO" id="GO:0000428">
    <property type="term" value="C:DNA-directed RNA polymerase complex"/>
    <property type="evidence" value="ECO:0007669"/>
    <property type="project" value="UniProtKB-KW"/>
</dbReference>
<dbReference type="GO" id="GO:0003677">
    <property type="term" value="F:DNA binding"/>
    <property type="evidence" value="ECO:0007669"/>
    <property type="project" value="UniProtKB-UniRule"/>
</dbReference>
<dbReference type="GO" id="GO:0003899">
    <property type="term" value="F:DNA-directed RNA polymerase activity"/>
    <property type="evidence" value="ECO:0007669"/>
    <property type="project" value="UniProtKB-UniRule"/>
</dbReference>
<dbReference type="GO" id="GO:0000287">
    <property type="term" value="F:magnesium ion binding"/>
    <property type="evidence" value="ECO:0007669"/>
    <property type="project" value="UniProtKB-UniRule"/>
</dbReference>
<dbReference type="GO" id="GO:0008270">
    <property type="term" value="F:zinc ion binding"/>
    <property type="evidence" value="ECO:0007669"/>
    <property type="project" value="UniProtKB-UniRule"/>
</dbReference>
<dbReference type="GO" id="GO:0006351">
    <property type="term" value="P:DNA-templated transcription"/>
    <property type="evidence" value="ECO:0007669"/>
    <property type="project" value="UniProtKB-UniRule"/>
</dbReference>
<dbReference type="CDD" id="cd02655">
    <property type="entry name" value="RNAP_beta'_C"/>
    <property type="match status" value="1"/>
</dbReference>
<dbReference type="CDD" id="cd01609">
    <property type="entry name" value="RNAP_beta'_N"/>
    <property type="match status" value="1"/>
</dbReference>
<dbReference type="FunFam" id="1.10.132.30:FF:000003">
    <property type="entry name" value="DNA-directed RNA polymerase subunit beta"/>
    <property type="match status" value="1"/>
</dbReference>
<dbReference type="FunFam" id="1.10.150.390:FF:000002">
    <property type="entry name" value="DNA-directed RNA polymerase subunit beta"/>
    <property type="match status" value="1"/>
</dbReference>
<dbReference type="FunFam" id="4.10.860.120:FF:000001">
    <property type="entry name" value="DNA-directed RNA polymerase subunit beta"/>
    <property type="match status" value="1"/>
</dbReference>
<dbReference type="Gene3D" id="1.10.132.30">
    <property type="match status" value="1"/>
</dbReference>
<dbReference type="Gene3D" id="1.10.150.390">
    <property type="match status" value="1"/>
</dbReference>
<dbReference type="Gene3D" id="1.10.1790.20">
    <property type="match status" value="1"/>
</dbReference>
<dbReference type="Gene3D" id="1.10.40.90">
    <property type="match status" value="1"/>
</dbReference>
<dbReference type="Gene3D" id="2.40.40.20">
    <property type="match status" value="1"/>
</dbReference>
<dbReference type="Gene3D" id="2.40.50.100">
    <property type="match status" value="3"/>
</dbReference>
<dbReference type="Gene3D" id="4.10.860.120">
    <property type="entry name" value="RNA polymerase II, clamp domain"/>
    <property type="match status" value="1"/>
</dbReference>
<dbReference type="Gene3D" id="1.10.274.100">
    <property type="entry name" value="RNA polymerase Rpb1, domain 3"/>
    <property type="match status" value="1"/>
</dbReference>
<dbReference type="HAMAP" id="MF_01322">
    <property type="entry name" value="RNApol_bact_RpoC"/>
    <property type="match status" value="1"/>
</dbReference>
<dbReference type="InterPro" id="IPR045867">
    <property type="entry name" value="DNA-dir_RpoC_beta_prime"/>
</dbReference>
<dbReference type="InterPro" id="IPR012754">
    <property type="entry name" value="DNA-dir_RpoC_beta_prime_bact"/>
</dbReference>
<dbReference type="InterPro" id="IPR000722">
    <property type="entry name" value="RNA_pol_asu"/>
</dbReference>
<dbReference type="InterPro" id="IPR006592">
    <property type="entry name" value="RNA_pol_N"/>
</dbReference>
<dbReference type="InterPro" id="IPR007080">
    <property type="entry name" value="RNA_pol_Rpb1_1"/>
</dbReference>
<dbReference type="InterPro" id="IPR007066">
    <property type="entry name" value="RNA_pol_Rpb1_3"/>
</dbReference>
<dbReference type="InterPro" id="IPR042102">
    <property type="entry name" value="RNA_pol_Rpb1_3_sf"/>
</dbReference>
<dbReference type="InterPro" id="IPR007083">
    <property type="entry name" value="RNA_pol_Rpb1_4"/>
</dbReference>
<dbReference type="InterPro" id="IPR007081">
    <property type="entry name" value="RNA_pol_Rpb1_5"/>
</dbReference>
<dbReference type="InterPro" id="IPR044893">
    <property type="entry name" value="RNA_pol_Rpb1_clamp_domain"/>
</dbReference>
<dbReference type="InterPro" id="IPR038120">
    <property type="entry name" value="Rpb1_funnel_sf"/>
</dbReference>
<dbReference type="NCBIfam" id="TIGR02386">
    <property type="entry name" value="rpoC_TIGR"/>
    <property type="match status" value="1"/>
</dbReference>
<dbReference type="PANTHER" id="PTHR19376">
    <property type="entry name" value="DNA-DIRECTED RNA POLYMERASE"/>
    <property type="match status" value="1"/>
</dbReference>
<dbReference type="PANTHER" id="PTHR19376:SF54">
    <property type="entry name" value="DNA-DIRECTED RNA POLYMERASE SUBUNIT BETA"/>
    <property type="match status" value="1"/>
</dbReference>
<dbReference type="Pfam" id="PF04997">
    <property type="entry name" value="RNA_pol_Rpb1_1"/>
    <property type="match status" value="1"/>
</dbReference>
<dbReference type="Pfam" id="PF00623">
    <property type="entry name" value="RNA_pol_Rpb1_2"/>
    <property type="match status" value="2"/>
</dbReference>
<dbReference type="Pfam" id="PF04983">
    <property type="entry name" value="RNA_pol_Rpb1_3"/>
    <property type="match status" value="1"/>
</dbReference>
<dbReference type="Pfam" id="PF05000">
    <property type="entry name" value="RNA_pol_Rpb1_4"/>
    <property type="match status" value="1"/>
</dbReference>
<dbReference type="Pfam" id="PF04998">
    <property type="entry name" value="RNA_pol_Rpb1_5"/>
    <property type="match status" value="1"/>
</dbReference>
<dbReference type="SMART" id="SM00663">
    <property type="entry name" value="RPOLA_N"/>
    <property type="match status" value="1"/>
</dbReference>
<dbReference type="SUPFAM" id="SSF64484">
    <property type="entry name" value="beta and beta-prime subunits of DNA dependent RNA-polymerase"/>
    <property type="match status" value="1"/>
</dbReference>
<sequence length="1408" mass="156163">MKDLLGFLKKQNVSSDFDTIKVTLASPEKIRSWSFGEVKKPETINYRTFKPERDGLFCAKIFGPIRDYECLCGKYKRLKHRGVICEKCGVEVTQSKVRRERMGHIDLATSVAHIWFLKSLPSRIGLMLDMTLKEIEAVLYFEAFMVVDPGLTPLEPWQLLSEEEYLDAMDEYGDEFEAQMGAEAIKKMLQAIDLDAEATRLREEMEATSSETKQKKISKRLKLIDSFVQSGNKPEWMILDVLPVLPPELRPLVPLDGGRFATSDLNDLYRRVINRNNRLKRLLDLMAPDIIVRNEKRMLQESVDSMLDNGRRGRAVTGTNKRQLKSLADMIKGKQGRFRQNLLGKRVDYSGRSVIVVGPSLRLHQCGLPKKMALELFKPFIFSKLQKRGLATTIKAAKKMVEQGLPEVWDVLDEVIREHPVLLNRAPTLHRLGIQAFEPVLIEGKAINLHPLVCSAFNADFDGDQMAVHVPLSLEAQLEARTLMMSTNNLLSPANGDPIIVPSQDVVLGLYYITREKINAKGEGKAFSNWMEVQRALDAKAVHVHTKIKLKIEETVIDDAGVETVKKGIVDTTVGRALLLRILPKGLGFDLLNLNLTKKNISKALNACYRILGPKETVIFADQLMYAGFKWSTLAGLSFCSDDMLIPDDKAPIIERADEQVTEIQRQFAQGLVTEGERYNKVVDIWSHTNELVTKSMMEELQYETVTDAEGNEVKQTSFNSVYMMADSGARGSVAQMRQLGGMRGLMAKPDGSIIETPITANFREGLNVLQYFISTHGARKGLADTALKTANSGYLTRRLVDVAQDVVVTEPDCGTDASITMAPHVEGGEVVEELKERILGRVVAEDVAGLDGEIIVEKGTLLDERLVNLIDESGVDAVKVHSPITCETKFGICQKCYGRDLARGHMVNLGEAVGVMAAQSIGEPGTQLTMRTFHIGGTASASTAQSQVEVKHEGKVKFDNLKTIKNTENQVVVTSRSGEISILDSLGREKERYKIPYGSMLNVKDGIDVTSGNVLATWDAHTHPIITEAEGIIQFGNFDGAVEEHVDELTGLTTHVVKSSKERSSATKELRPYIQLVDDKGEVVPFPGTQTPAMYYLPENSVVVVNQSDKVGAGDILARIPQESSKTKDITGGLPRVADLFEARVPKEPAIMAEVSGVVGFGKETKGKQRLVITQDSGEQHETLIPKWRSVDVFEGERVEKGDVVVDGNPNPHDILRLLGVERLTKYIVDEVQDVYRLQGVRINDKHIETVVRQMLRKVEVRSTGDTSLIKGEQAEFARVLEMNEKVSDEGSVEASYQRVLLGITKASLATESFISAASFQETTRVLTEAAVSGKEDKLVGLKENVIVGRLIPAGTGFAYHKARKEASEKTQRELAAFMNTDDESAVQEEVVEETISVTESVEQTTE</sequence>
<comment type="function">
    <text evidence="1">DNA-dependent RNA polymerase catalyzes the transcription of DNA into RNA using the four ribonucleoside triphosphates as substrates.</text>
</comment>
<comment type="catalytic activity">
    <reaction evidence="1">
        <text>RNA(n) + a ribonucleoside 5'-triphosphate = RNA(n+1) + diphosphate</text>
        <dbReference type="Rhea" id="RHEA:21248"/>
        <dbReference type="Rhea" id="RHEA-COMP:14527"/>
        <dbReference type="Rhea" id="RHEA-COMP:17342"/>
        <dbReference type="ChEBI" id="CHEBI:33019"/>
        <dbReference type="ChEBI" id="CHEBI:61557"/>
        <dbReference type="ChEBI" id="CHEBI:140395"/>
        <dbReference type="EC" id="2.7.7.6"/>
    </reaction>
</comment>
<comment type="cofactor">
    <cofactor evidence="1">
        <name>Mg(2+)</name>
        <dbReference type="ChEBI" id="CHEBI:18420"/>
    </cofactor>
    <text evidence="1">Binds 1 Mg(2+) ion per subunit.</text>
</comment>
<comment type="cofactor">
    <cofactor evidence="1">
        <name>Zn(2+)</name>
        <dbReference type="ChEBI" id="CHEBI:29105"/>
    </cofactor>
    <text evidence="1">Binds 2 Zn(2+) ions per subunit.</text>
</comment>
<comment type="subunit">
    <text evidence="1">The RNAP catalytic core consists of 2 alpha, 1 beta, 1 beta' and 1 omega subunit. When a sigma factor is associated with the core the holoenzyme is formed, which can initiate transcription.</text>
</comment>
<comment type="similarity">
    <text evidence="1">Belongs to the RNA polymerase beta' chain family.</text>
</comment>
<accession>Q31IY8</accession>
<reference key="1">
    <citation type="journal article" date="2006" name="PLoS Biol.">
        <title>The genome of deep-sea vent chemolithoautotroph Thiomicrospira crunogena XCL-2.</title>
        <authorList>
            <person name="Scott K.M."/>
            <person name="Sievert S.M."/>
            <person name="Abril F.N."/>
            <person name="Ball L.A."/>
            <person name="Barrett C.J."/>
            <person name="Blake R.A."/>
            <person name="Boller A.J."/>
            <person name="Chain P.S.G."/>
            <person name="Clark J.A."/>
            <person name="Davis C.R."/>
            <person name="Detter C."/>
            <person name="Do K.F."/>
            <person name="Dobrinski K.P."/>
            <person name="Faza B.I."/>
            <person name="Fitzpatrick K.A."/>
            <person name="Freyermuth S.K."/>
            <person name="Harmer T.L."/>
            <person name="Hauser L.J."/>
            <person name="Huegler M."/>
            <person name="Kerfeld C.A."/>
            <person name="Klotz M.G."/>
            <person name="Kong W.W."/>
            <person name="Land M."/>
            <person name="Lapidus A."/>
            <person name="Larimer F.W."/>
            <person name="Longo D.L."/>
            <person name="Lucas S."/>
            <person name="Malfatti S.A."/>
            <person name="Massey S.E."/>
            <person name="Martin D.D."/>
            <person name="McCuddin Z."/>
            <person name="Meyer F."/>
            <person name="Moore J.L."/>
            <person name="Ocampo L.H. Jr."/>
            <person name="Paul J.H."/>
            <person name="Paulsen I.T."/>
            <person name="Reep D.K."/>
            <person name="Ren Q."/>
            <person name="Ross R.L."/>
            <person name="Sato P.Y."/>
            <person name="Thomas P."/>
            <person name="Tinkham L.E."/>
            <person name="Zeruth G.T."/>
        </authorList>
    </citation>
    <scope>NUCLEOTIDE SEQUENCE [LARGE SCALE GENOMIC DNA]</scope>
    <source>
        <strain>DSM 25203 / XCL-2</strain>
    </source>
</reference>
<feature type="chain" id="PRO_0000240828" description="DNA-directed RNA polymerase subunit beta'">
    <location>
        <begin position="1"/>
        <end position="1408"/>
    </location>
</feature>
<feature type="binding site" evidence="1">
    <location>
        <position position="70"/>
    </location>
    <ligand>
        <name>Zn(2+)</name>
        <dbReference type="ChEBI" id="CHEBI:29105"/>
        <label>1</label>
    </ligand>
</feature>
<feature type="binding site" evidence="1">
    <location>
        <position position="72"/>
    </location>
    <ligand>
        <name>Zn(2+)</name>
        <dbReference type="ChEBI" id="CHEBI:29105"/>
        <label>1</label>
    </ligand>
</feature>
<feature type="binding site" evidence="1">
    <location>
        <position position="85"/>
    </location>
    <ligand>
        <name>Zn(2+)</name>
        <dbReference type="ChEBI" id="CHEBI:29105"/>
        <label>1</label>
    </ligand>
</feature>
<feature type="binding site" evidence="1">
    <location>
        <position position="88"/>
    </location>
    <ligand>
        <name>Zn(2+)</name>
        <dbReference type="ChEBI" id="CHEBI:29105"/>
        <label>1</label>
    </ligand>
</feature>
<feature type="binding site" evidence="1">
    <location>
        <position position="460"/>
    </location>
    <ligand>
        <name>Mg(2+)</name>
        <dbReference type="ChEBI" id="CHEBI:18420"/>
    </ligand>
</feature>
<feature type="binding site" evidence="1">
    <location>
        <position position="462"/>
    </location>
    <ligand>
        <name>Mg(2+)</name>
        <dbReference type="ChEBI" id="CHEBI:18420"/>
    </ligand>
</feature>
<feature type="binding site" evidence="1">
    <location>
        <position position="464"/>
    </location>
    <ligand>
        <name>Mg(2+)</name>
        <dbReference type="ChEBI" id="CHEBI:18420"/>
    </ligand>
</feature>
<feature type="binding site" evidence="1">
    <location>
        <position position="814"/>
    </location>
    <ligand>
        <name>Zn(2+)</name>
        <dbReference type="ChEBI" id="CHEBI:29105"/>
        <label>2</label>
    </ligand>
</feature>
<feature type="binding site" evidence="1">
    <location>
        <position position="887"/>
    </location>
    <ligand>
        <name>Zn(2+)</name>
        <dbReference type="ChEBI" id="CHEBI:29105"/>
        <label>2</label>
    </ligand>
</feature>
<feature type="binding site" evidence="1">
    <location>
        <position position="894"/>
    </location>
    <ligand>
        <name>Zn(2+)</name>
        <dbReference type="ChEBI" id="CHEBI:29105"/>
        <label>2</label>
    </ligand>
</feature>
<feature type="binding site" evidence="1">
    <location>
        <position position="897"/>
    </location>
    <ligand>
        <name>Zn(2+)</name>
        <dbReference type="ChEBI" id="CHEBI:29105"/>
        <label>2</label>
    </ligand>
</feature>
<organism>
    <name type="scientific">Hydrogenovibrio crunogenus (strain DSM 25203 / XCL-2)</name>
    <name type="common">Thiomicrospira crunogena</name>
    <dbReference type="NCBI Taxonomy" id="317025"/>
    <lineage>
        <taxon>Bacteria</taxon>
        <taxon>Pseudomonadati</taxon>
        <taxon>Pseudomonadota</taxon>
        <taxon>Gammaproteobacteria</taxon>
        <taxon>Thiotrichales</taxon>
        <taxon>Piscirickettsiaceae</taxon>
        <taxon>Hydrogenovibrio</taxon>
    </lineage>
</organism>